<protein>
    <recommendedName>
        <fullName>Laccase</fullName>
        <ecNumber evidence="2">1.10.3.2</ecNumber>
    </recommendedName>
    <alternativeName>
        <fullName>Benzenediol:oxygen oxidoreductase</fullName>
    </alternativeName>
    <alternativeName>
        <fullName>Diphenol oxidase</fullName>
    </alternativeName>
    <alternativeName>
        <fullName>Ligninolytic phenoloxidase</fullName>
    </alternativeName>
    <alternativeName>
        <fullName>Urishiol oxidase</fullName>
    </alternativeName>
</protein>
<reference key="1">
    <citation type="journal article" date="1991" name="J. Gen. Microbiol.">
        <title>Isolation and structural analysis of the laccase gene from the lignin-degrading fungus Phlebia radiata.</title>
        <authorList>
            <person name="Saloheimo M."/>
            <person name="Niku-Paavola M.L."/>
            <person name="Knowles J.K."/>
        </authorList>
    </citation>
    <scope>NUCLEOTIDE SEQUENCE [GENOMIC DNA]</scope>
    <scope>PARTIAL PROTEIN SEQUENCE</scope>
    <source>
        <strain>ATCC 64658 / 79</strain>
    </source>
</reference>
<reference key="2">
    <citation type="submission" date="1999-04" db="EMBL/GenBank/DDBJ databases">
        <authorList>
            <person name="Saloheimo M."/>
        </authorList>
    </citation>
    <scope>SEQUENCE REVISION TO C-TERMINUS</scope>
</reference>
<gene>
    <name type="primary">LAC</name>
</gene>
<accession>Q01679</accession>
<evidence type="ECO:0000250" key="1">
    <source>
        <dbReference type="UniProtKB" id="D0VWU3"/>
    </source>
</evidence>
<evidence type="ECO:0000250" key="2">
    <source>
        <dbReference type="UniProtKB" id="Q70KY3"/>
    </source>
</evidence>
<evidence type="ECO:0000255" key="3"/>
<evidence type="ECO:0000305" key="4"/>
<feature type="signal peptide">
    <location>
        <begin position="1"/>
        <end position="21"/>
    </location>
</feature>
<feature type="chain" id="PRO_0000002928" description="Laccase">
    <location>
        <begin position="22"/>
        <end position="520"/>
    </location>
</feature>
<feature type="domain" description="Plastocyanin-like 1">
    <location>
        <begin position="22"/>
        <end position="148"/>
    </location>
</feature>
<feature type="domain" description="Plastocyanin-like 2">
    <location>
        <begin position="160"/>
        <end position="304"/>
    </location>
</feature>
<feature type="domain" description="Plastocyanin-like 3">
    <location>
        <begin position="373"/>
        <end position="496"/>
    </location>
</feature>
<feature type="binding site" description="type 2 copper site" evidence="1">
    <location>
        <position position="85"/>
    </location>
    <ligand>
        <name>Cu cation</name>
        <dbReference type="ChEBI" id="CHEBI:23378"/>
        <label>1</label>
    </ligand>
</feature>
<feature type="binding site" description="type 3 copper site" evidence="1">
    <location>
        <position position="87"/>
    </location>
    <ligand>
        <name>Cu cation</name>
        <dbReference type="ChEBI" id="CHEBI:23378"/>
        <label>2</label>
    </ligand>
</feature>
<feature type="binding site" description="type 3 copper site" evidence="1">
    <location>
        <position position="130"/>
    </location>
    <ligand>
        <name>Cu cation</name>
        <dbReference type="ChEBI" id="CHEBI:23378"/>
        <label>2</label>
    </ligand>
</feature>
<feature type="binding site" description="type 3 copper site" evidence="1">
    <location>
        <position position="132"/>
    </location>
    <ligand>
        <name>Cu cation</name>
        <dbReference type="ChEBI" id="CHEBI:23378"/>
        <label>3</label>
    </ligand>
</feature>
<feature type="binding site" description="type 1 copper site" evidence="1">
    <location>
        <position position="418"/>
    </location>
    <ligand>
        <name>Cu cation</name>
        <dbReference type="ChEBI" id="CHEBI:23378"/>
        <label>4</label>
    </ligand>
</feature>
<feature type="binding site" description="type 2 copper site" evidence="1">
    <location>
        <position position="421"/>
    </location>
    <ligand>
        <name>Cu cation</name>
        <dbReference type="ChEBI" id="CHEBI:23378"/>
        <label>1</label>
    </ligand>
</feature>
<feature type="binding site" description="type 3 copper site" evidence="1">
    <location>
        <position position="423"/>
    </location>
    <ligand>
        <name>Cu cation</name>
        <dbReference type="ChEBI" id="CHEBI:23378"/>
        <label>3</label>
    </ligand>
</feature>
<feature type="binding site" description="type 3 copper site" evidence="1">
    <location>
        <position position="473"/>
    </location>
    <ligand>
        <name>Cu cation</name>
        <dbReference type="ChEBI" id="CHEBI:23378"/>
        <label>3</label>
    </ligand>
</feature>
<feature type="binding site" description="type 1 copper site" evidence="1">
    <location>
        <position position="474"/>
    </location>
    <ligand>
        <name>Cu cation</name>
        <dbReference type="ChEBI" id="CHEBI:23378"/>
        <label>4</label>
    </ligand>
</feature>
<feature type="binding site" description="type 3 copper site" evidence="1">
    <location>
        <position position="475"/>
    </location>
    <ligand>
        <name>Cu cation</name>
        <dbReference type="ChEBI" id="CHEBI:23378"/>
        <label>2</label>
    </ligand>
</feature>
<feature type="binding site" description="type 1 copper site" evidence="1">
    <location>
        <position position="479"/>
    </location>
    <ligand>
        <name>Cu cation</name>
        <dbReference type="ChEBI" id="CHEBI:23378"/>
        <label>4</label>
    </ligand>
</feature>
<feature type="glycosylation site" description="N-linked (GlcNAc...) asparagine" evidence="3">
    <location>
        <position position="75"/>
    </location>
</feature>
<feature type="glycosylation site" description="N-linked (GlcNAc...) asparagine" evidence="3">
    <location>
        <position position="352"/>
    </location>
</feature>
<feature type="glycosylation site" description="N-linked (GlcNAc...) asparagine" evidence="3">
    <location>
        <position position="402"/>
    </location>
</feature>
<feature type="disulfide bond" evidence="2">
    <location>
        <begin position="106"/>
        <end position="509"/>
    </location>
</feature>
<feature type="disulfide bond" evidence="1">
    <location>
        <begin position="138"/>
        <end position="227"/>
    </location>
</feature>
<sequence length="520" mass="55704">MHTFLRSTALVVAGLSARALASIGPVTDFHIVNAAVSPDGFSRQAVLAEGVFPGPLIAGNKGDNFQINVIDELTNATMLKTTTIHWHGFFQHGTNWADGPAFINQCPIASGDSFLYNFQVPDQAGTFWYHSHLSTQYCDGLRGPFVVYDPADPYLDQYDVDDDSTVITLADWYHTAARLGSPFPAADTTLINGLGRCGEAGCPVSDLAVISVTKGKRYRFRLVSISCDSFFTFSIDGHSLNVIEVDATNHQPLTVDELTIYAGQRYSFILTADQDVDNYWIRANPGIGITTGFAGGINSAILRYDGADVVEPTTTQATSPVVLSESNLAPLTNAAAPGLPEVGGVDLALNFNLTFDGPSLKFQINGVTFVPPTVPVLLQILSGAQSAADLLPSGSVYALPSNATIELSLPAGALGGPHPFHLHGHTFSVVRPAGSTTYNYVNPVQRDVVSIGNTGDNVTIRFDTNNPGPWFLHCHIDWHLEAGFAVVFAEDIPDVASINPVPQDWSNLCPIYNALDASDH</sequence>
<organism>
    <name type="scientific">Phlebia radiata</name>
    <name type="common">White-rot fungus</name>
    <dbReference type="NCBI Taxonomy" id="5308"/>
    <lineage>
        <taxon>Eukaryota</taxon>
        <taxon>Fungi</taxon>
        <taxon>Dikarya</taxon>
        <taxon>Basidiomycota</taxon>
        <taxon>Agaricomycotina</taxon>
        <taxon>Agaricomycetes</taxon>
        <taxon>Polyporales</taxon>
        <taxon>Meruliaceae</taxon>
        <taxon>Phlebia</taxon>
    </lineage>
</organism>
<proteinExistence type="evidence at protein level"/>
<keyword id="KW-0186">Copper</keyword>
<keyword id="KW-0903">Direct protein sequencing</keyword>
<keyword id="KW-1015">Disulfide bond</keyword>
<keyword id="KW-0325">Glycoprotein</keyword>
<keyword id="KW-0439">Lignin degradation</keyword>
<keyword id="KW-0479">Metal-binding</keyword>
<keyword id="KW-0560">Oxidoreductase</keyword>
<keyword id="KW-0677">Repeat</keyword>
<keyword id="KW-0964">Secreted</keyword>
<keyword id="KW-0732">Signal</keyword>
<dbReference type="EC" id="1.10.3.2" evidence="2"/>
<dbReference type="EMBL" id="X52134">
    <property type="protein sequence ID" value="CAA36379.2"/>
    <property type="molecule type" value="Genomic_DNA"/>
</dbReference>
<dbReference type="PIR" id="S18746">
    <property type="entry name" value="S18746"/>
</dbReference>
<dbReference type="SMR" id="Q01679"/>
<dbReference type="CAZy" id="AA1">
    <property type="family name" value="Auxiliary Activities 1"/>
</dbReference>
<dbReference type="GlyCosmos" id="Q01679">
    <property type="glycosylation" value="3 sites, No reported glycans"/>
</dbReference>
<dbReference type="GO" id="GO:0005576">
    <property type="term" value="C:extracellular region"/>
    <property type="evidence" value="ECO:0007669"/>
    <property type="project" value="UniProtKB-SubCell"/>
</dbReference>
<dbReference type="GO" id="GO:0005507">
    <property type="term" value="F:copper ion binding"/>
    <property type="evidence" value="ECO:0007669"/>
    <property type="project" value="InterPro"/>
</dbReference>
<dbReference type="GO" id="GO:0052716">
    <property type="term" value="F:hydroquinone:oxygen oxidoreductase activity"/>
    <property type="evidence" value="ECO:0007669"/>
    <property type="project" value="UniProtKB-EC"/>
</dbReference>
<dbReference type="GO" id="GO:0046274">
    <property type="term" value="P:lignin catabolic process"/>
    <property type="evidence" value="ECO:0007669"/>
    <property type="project" value="UniProtKB-KW"/>
</dbReference>
<dbReference type="CDD" id="cd13856">
    <property type="entry name" value="CuRO_1_Tv-LCC_like"/>
    <property type="match status" value="1"/>
</dbReference>
<dbReference type="CDD" id="cd13903">
    <property type="entry name" value="CuRO_3_Tv-LCC_like"/>
    <property type="match status" value="1"/>
</dbReference>
<dbReference type="FunFam" id="2.60.40.420:FF:000045">
    <property type="entry name" value="Laccase 2"/>
    <property type="match status" value="1"/>
</dbReference>
<dbReference type="FunFam" id="2.60.40.420:FF:000125">
    <property type="entry name" value="Laccase 2"/>
    <property type="match status" value="1"/>
</dbReference>
<dbReference type="FunFam" id="2.60.40.420:FF:000112">
    <property type="entry name" value="Laccase B"/>
    <property type="match status" value="1"/>
</dbReference>
<dbReference type="Gene3D" id="2.60.40.420">
    <property type="entry name" value="Cupredoxins - blue copper proteins"/>
    <property type="match status" value="3"/>
</dbReference>
<dbReference type="InterPro" id="IPR011707">
    <property type="entry name" value="Cu-oxidase-like_N"/>
</dbReference>
<dbReference type="InterPro" id="IPR001117">
    <property type="entry name" value="Cu-oxidase_2nd"/>
</dbReference>
<dbReference type="InterPro" id="IPR011706">
    <property type="entry name" value="Cu-oxidase_C"/>
</dbReference>
<dbReference type="InterPro" id="IPR045087">
    <property type="entry name" value="Cu-oxidase_fam"/>
</dbReference>
<dbReference type="InterPro" id="IPR033138">
    <property type="entry name" value="Cu_oxidase_CS"/>
</dbReference>
<dbReference type="InterPro" id="IPR008972">
    <property type="entry name" value="Cupredoxin"/>
</dbReference>
<dbReference type="PANTHER" id="PTHR11709:SF511">
    <property type="entry name" value="LACCASE"/>
    <property type="match status" value="1"/>
</dbReference>
<dbReference type="PANTHER" id="PTHR11709">
    <property type="entry name" value="MULTI-COPPER OXIDASE"/>
    <property type="match status" value="1"/>
</dbReference>
<dbReference type="Pfam" id="PF00394">
    <property type="entry name" value="Cu-oxidase"/>
    <property type="match status" value="1"/>
</dbReference>
<dbReference type="Pfam" id="PF07731">
    <property type="entry name" value="Cu-oxidase_2"/>
    <property type="match status" value="1"/>
</dbReference>
<dbReference type="Pfam" id="PF07732">
    <property type="entry name" value="Cu-oxidase_3"/>
    <property type="match status" value="1"/>
</dbReference>
<dbReference type="SUPFAM" id="SSF49503">
    <property type="entry name" value="Cupredoxins"/>
    <property type="match status" value="3"/>
</dbReference>
<dbReference type="PROSITE" id="PS00079">
    <property type="entry name" value="MULTICOPPER_OXIDASE1"/>
    <property type="match status" value="1"/>
</dbReference>
<name>LAC1_PHLRA</name>
<comment type="function">
    <text evidence="2">Lignin degradation and detoxification of lignin-derived products.</text>
</comment>
<comment type="catalytic activity">
    <reaction evidence="2">
        <text>4 hydroquinone + O2 = 4 benzosemiquinone + 2 H2O</text>
        <dbReference type="Rhea" id="RHEA:11276"/>
        <dbReference type="ChEBI" id="CHEBI:15377"/>
        <dbReference type="ChEBI" id="CHEBI:15379"/>
        <dbReference type="ChEBI" id="CHEBI:17594"/>
        <dbReference type="ChEBI" id="CHEBI:17977"/>
        <dbReference type="EC" id="1.10.3.2"/>
    </reaction>
</comment>
<comment type="cofactor">
    <cofactor evidence="2">
        <name>Cu cation</name>
        <dbReference type="ChEBI" id="CHEBI:23378"/>
    </cofactor>
    <text evidence="2">Binds 4 Cu cations per monomer.</text>
</comment>
<comment type="subcellular location">
    <subcellularLocation>
        <location evidence="2">Secreted</location>
    </subcellularLocation>
</comment>
<comment type="similarity">
    <text evidence="4">Belongs to the multicopper oxidase family.</text>
</comment>